<accession>A5I3D3</accession>
<accession>A7G4U3</accession>
<gene>
    <name type="ordered locus">CBO2008</name>
    <name type="ordered locus">CLC_1955</name>
</gene>
<reference key="1">
    <citation type="journal article" date="2007" name="Genome Res.">
        <title>Genome sequence of a proteolytic (Group I) Clostridium botulinum strain Hall A and comparative analysis of the clostridial genomes.</title>
        <authorList>
            <person name="Sebaihia M."/>
            <person name="Peck M.W."/>
            <person name="Minton N.P."/>
            <person name="Thomson N.R."/>
            <person name="Holden M.T.G."/>
            <person name="Mitchell W.J."/>
            <person name="Carter A.T."/>
            <person name="Bentley S.D."/>
            <person name="Mason D.R."/>
            <person name="Crossman L."/>
            <person name="Paul C.J."/>
            <person name="Ivens A."/>
            <person name="Wells-Bennik M.H.J."/>
            <person name="Davis I.J."/>
            <person name="Cerdeno-Tarraga A.M."/>
            <person name="Churcher C."/>
            <person name="Quail M.A."/>
            <person name="Chillingworth T."/>
            <person name="Feltwell T."/>
            <person name="Fraser A."/>
            <person name="Goodhead I."/>
            <person name="Hance Z."/>
            <person name="Jagels K."/>
            <person name="Larke N."/>
            <person name="Maddison M."/>
            <person name="Moule S."/>
            <person name="Mungall K."/>
            <person name="Norbertczak H."/>
            <person name="Rabbinowitsch E."/>
            <person name="Sanders M."/>
            <person name="Simmonds M."/>
            <person name="White B."/>
            <person name="Whithead S."/>
            <person name="Parkhill J."/>
        </authorList>
    </citation>
    <scope>NUCLEOTIDE SEQUENCE [LARGE SCALE GENOMIC DNA]</scope>
    <source>
        <strain>Hall / ATCC 3502 / NCTC 13319 / Type A</strain>
    </source>
</reference>
<reference key="2">
    <citation type="journal article" date="2007" name="PLoS ONE">
        <title>Analysis of the neurotoxin complex genes in Clostridium botulinum A1-A4 and B1 strains: BoNT/A3, /Ba4 and /B1 clusters are located within plasmids.</title>
        <authorList>
            <person name="Smith T.J."/>
            <person name="Hill K.K."/>
            <person name="Foley B.T."/>
            <person name="Detter J.C."/>
            <person name="Munk A.C."/>
            <person name="Bruce D.C."/>
            <person name="Doggett N.A."/>
            <person name="Smith L.A."/>
            <person name="Marks J.D."/>
            <person name="Xie G."/>
            <person name="Brettin T.S."/>
        </authorList>
    </citation>
    <scope>NUCLEOTIDE SEQUENCE [LARGE SCALE GENOMIC DNA]</scope>
    <source>
        <strain>Hall / ATCC 3502 / NCTC 13319 / Type A</strain>
    </source>
</reference>
<keyword id="KW-1185">Reference proteome</keyword>
<protein>
    <recommendedName>
        <fullName evidence="1">UPF0597 protein CBO2008/CLC_1955</fullName>
    </recommendedName>
</protein>
<organism>
    <name type="scientific">Clostridium botulinum (strain Hall / ATCC 3502 / NCTC 13319 / Type A)</name>
    <dbReference type="NCBI Taxonomy" id="441771"/>
    <lineage>
        <taxon>Bacteria</taxon>
        <taxon>Bacillati</taxon>
        <taxon>Bacillota</taxon>
        <taxon>Clostridia</taxon>
        <taxon>Eubacteriales</taxon>
        <taxon>Clostridiaceae</taxon>
        <taxon>Clostridium</taxon>
    </lineage>
</organism>
<feature type="chain" id="PRO_0000339794" description="UPF0597 protein CBO2008/CLC_1955">
    <location>
        <begin position="1"/>
        <end position="434"/>
    </location>
</feature>
<name>Y2008_CLOBH</name>
<comment type="similarity">
    <text evidence="1">Belongs to the UPF0597 family.</text>
</comment>
<dbReference type="EMBL" id="CP000727">
    <property type="protein sequence ID" value="ABS36442.1"/>
    <property type="molecule type" value="Genomic_DNA"/>
</dbReference>
<dbReference type="EMBL" id="AM412317">
    <property type="protein sequence ID" value="CAL83551.1"/>
    <property type="molecule type" value="Genomic_DNA"/>
</dbReference>
<dbReference type="RefSeq" id="WP_011986541.1">
    <property type="nucleotide sequence ID" value="NC_009698.1"/>
</dbReference>
<dbReference type="RefSeq" id="YP_001254511.1">
    <property type="nucleotide sequence ID" value="NC_009495.1"/>
</dbReference>
<dbReference type="RefSeq" id="YP_001387808.1">
    <property type="nucleotide sequence ID" value="NC_009698.1"/>
</dbReference>
<dbReference type="SMR" id="A5I3D3"/>
<dbReference type="GeneID" id="5187987"/>
<dbReference type="KEGG" id="cbh:CLC_1955"/>
<dbReference type="KEGG" id="cbo:CBO2008"/>
<dbReference type="PATRIC" id="fig|413999.7.peg.1982"/>
<dbReference type="HOGENOM" id="CLU_051840_0_0_9"/>
<dbReference type="PRO" id="PR:A5I3D3"/>
<dbReference type="Proteomes" id="UP000001986">
    <property type="component" value="Chromosome"/>
</dbReference>
<dbReference type="GO" id="GO:0080146">
    <property type="term" value="F:L-cysteine desulfhydrase activity"/>
    <property type="evidence" value="ECO:0000318"/>
    <property type="project" value="GO_Central"/>
</dbReference>
<dbReference type="GO" id="GO:0019450">
    <property type="term" value="P:L-cysteine catabolic process to pyruvate"/>
    <property type="evidence" value="ECO:0000318"/>
    <property type="project" value="GO_Central"/>
</dbReference>
<dbReference type="HAMAP" id="MF_01845">
    <property type="entry name" value="UPF0597"/>
    <property type="match status" value="1"/>
</dbReference>
<dbReference type="InterPro" id="IPR005130">
    <property type="entry name" value="Ser_deHydtase-like_asu"/>
</dbReference>
<dbReference type="InterPro" id="IPR021144">
    <property type="entry name" value="UPF0597"/>
</dbReference>
<dbReference type="PANTHER" id="PTHR30501">
    <property type="entry name" value="UPF0597 PROTEIN YHAM"/>
    <property type="match status" value="1"/>
</dbReference>
<dbReference type="PANTHER" id="PTHR30501:SF2">
    <property type="entry name" value="UPF0597 PROTEIN YHAM"/>
    <property type="match status" value="1"/>
</dbReference>
<dbReference type="Pfam" id="PF03313">
    <property type="entry name" value="SDH_alpha"/>
    <property type="match status" value="1"/>
</dbReference>
<dbReference type="PIRSF" id="PIRSF006054">
    <property type="entry name" value="UCP006054"/>
    <property type="match status" value="1"/>
</dbReference>
<sequence length="434" mass="46388">MSRLSKEEISERLLELIKDETKPAIGCTEPVAVAFTVATGKKYMAGEVLKIDLKVSKNILKNGKSVTIPNTEVCGLDIAGALGEICGDPEEGLFVFRNVNNEYLDKAKEMIKNKVVTLNPIENTDPVFVEATLKGEQDEVIAILKGGHTNIEKVIVNGKIAFEKDNKNKKDNKDCDFIKELSLKDIRQITEDISIEKLDFIMDGIEMNKEAAKEGLKRQKGLTLGSSLLKLQEEGKIGKDSATIARILTAAGSDLRMGGGMCPIMTSGGSGNQGLCVILPINVVAEDIKAPKERLQRAVFFGHAVNNFVKKYTGKLSAICGCAIAAGIGATAGIAWLLGGKDKEIEGAILNMLANLTGMVCDGAKGSCAIKLSTSASEAVISAYLALNDIIVPNNTGIIGNTVEDTINNLGMLCKDGFYKADDVMLSIACKEVI</sequence>
<evidence type="ECO:0000255" key="1">
    <source>
        <dbReference type="HAMAP-Rule" id="MF_01845"/>
    </source>
</evidence>
<proteinExistence type="inferred from homology"/>